<sequence>MTDCEFGYIYRLAQDYLQCVLQIPQPGSGPSKTSRVLQNVAFSVQKEVEKNLKSCLDNVNVVSVDTARTLFNQVMEKEFEDGIINWGRIVTIFAFEGILIKKLLRQQIAPDVDTYKEISYFVAEFIMNNTGEWIRQNGGWENGFVKKFEPKSGWMTFLEVTGKICEMLSLLKQYC</sequence>
<reference key="1">
    <citation type="journal article" date="1995" name="Oncogene">
        <title>A novel Bcl-2 related gene, Bfl-1, is overexpressed in stomach cancer and preferentially expressed in bone marrow.</title>
        <authorList>
            <person name="Choi S.S."/>
            <person name="Park I.-C."/>
            <person name="Yun J.W."/>
            <person name="Sung Y.C."/>
            <person name="Hong S.-I."/>
            <person name="Shin H.-S."/>
        </authorList>
    </citation>
    <scope>NUCLEOTIDE SEQUENCE [MRNA] (ISOFORM 1)</scope>
    <source>
        <tissue>Liver</tissue>
    </source>
</reference>
<reference key="2">
    <citation type="journal article" date="1996" name="Blood">
        <title>Cloning of human Bcl-2 homologue: inflammatory cytokines induce human A1 in cultured endothelial cells.</title>
        <authorList>
            <person name="Karsan A."/>
            <person name="Yee E."/>
            <person name="Kaushansky K."/>
            <person name="Harlan J.M."/>
        </authorList>
    </citation>
    <scope>NUCLEOTIDE SEQUENCE [MRNA] (ISOFORM 1)</scope>
    <source>
        <tissue>Umbilical vein</tissue>
    </source>
</reference>
<reference key="3">
    <citation type="journal article" date="1997" name="Oncogene">
        <title>GRS, a novel member of the Bcl-2 gene family, is highly expressed in multiple cancer cell lines and in normal leukocytes.</title>
        <authorList>
            <person name="Kenny J.J."/>
            <person name="Knobloch T.J."/>
            <person name="Augustus M."/>
            <person name="Carter K.C."/>
            <person name="Rosen C.A."/>
            <person name="Lang J.C."/>
        </authorList>
    </citation>
    <scope>NUCLEOTIDE SEQUENCE [MRNA] (ISOFORM 1)</scope>
    <source>
        <tissue>T-cell</tissue>
    </source>
</reference>
<reference key="4">
    <citation type="submission" date="2003-02" db="EMBL/GenBank/DDBJ databases">
        <title>A widely expressed pro-apoptotic splice variant of the human A1 gene is specifically targeted to the nucleus.</title>
        <authorList>
            <person name="Barnes F.A."/>
            <person name="Rowe S.J."/>
            <person name="Whyte M.K.B."/>
            <person name="Bingle C.D."/>
        </authorList>
    </citation>
    <scope>NUCLEOTIDE SEQUENCE [MRNA] (ISOFORM 2)</scope>
</reference>
<reference key="5">
    <citation type="submission" date="2003-05" db="EMBL/GenBank/DDBJ databases">
        <title>Cloning of human full-length CDSs in BD Creator(TM) system donor vector.</title>
        <authorList>
            <person name="Kalnine N."/>
            <person name="Chen X."/>
            <person name="Rolfs A."/>
            <person name="Halleck A."/>
            <person name="Hines L."/>
            <person name="Eisenstein S."/>
            <person name="Koundinya M."/>
            <person name="Raphael J."/>
            <person name="Moreira D."/>
            <person name="Kelley T."/>
            <person name="LaBaer J."/>
            <person name="Lin Y."/>
            <person name="Phelan M."/>
            <person name="Farmer A."/>
        </authorList>
    </citation>
    <scope>NUCLEOTIDE SEQUENCE [LARGE SCALE MRNA] (ISOFORM 1)</scope>
</reference>
<reference key="6">
    <citation type="submission" date="2004-06" db="EMBL/GenBank/DDBJ databases">
        <title>Cloning of human full open reading frames in Gateway(TM) system entry vector (pDONR201).</title>
        <authorList>
            <person name="Halleck A."/>
            <person name="Ebert L."/>
            <person name="Mkoundinya M."/>
            <person name="Schick M."/>
            <person name="Eisenstein S."/>
            <person name="Neubert P."/>
            <person name="Kstrang K."/>
            <person name="Schatten R."/>
            <person name="Shen B."/>
            <person name="Henze S."/>
            <person name="Mar W."/>
            <person name="Korn B."/>
            <person name="Zuo D."/>
            <person name="Hu Y."/>
            <person name="LaBaer J."/>
        </authorList>
    </citation>
    <scope>NUCLEOTIDE SEQUENCE [LARGE SCALE MRNA] (ISOFORM 1)</scope>
    <scope>VARIANTS TYR-19; LYS-39 AND ASP-82</scope>
</reference>
<reference key="7">
    <citation type="journal article" date="2006" name="Nature">
        <title>Analysis of the DNA sequence and duplication history of human chromosome 15.</title>
        <authorList>
            <person name="Zody M.C."/>
            <person name="Garber M."/>
            <person name="Sharpe T."/>
            <person name="Young S.K."/>
            <person name="Rowen L."/>
            <person name="O'Neill K."/>
            <person name="Whittaker C.A."/>
            <person name="Kamal M."/>
            <person name="Chang J.L."/>
            <person name="Cuomo C.A."/>
            <person name="Dewar K."/>
            <person name="FitzGerald M.G."/>
            <person name="Kodira C.D."/>
            <person name="Madan A."/>
            <person name="Qin S."/>
            <person name="Yang X."/>
            <person name="Abbasi N."/>
            <person name="Abouelleil A."/>
            <person name="Arachchi H.M."/>
            <person name="Baradarani L."/>
            <person name="Birditt B."/>
            <person name="Bloom S."/>
            <person name="Bloom T."/>
            <person name="Borowsky M.L."/>
            <person name="Burke J."/>
            <person name="Butler J."/>
            <person name="Cook A."/>
            <person name="DeArellano K."/>
            <person name="DeCaprio D."/>
            <person name="Dorris L. III"/>
            <person name="Dors M."/>
            <person name="Eichler E.E."/>
            <person name="Engels R."/>
            <person name="Fahey J."/>
            <person name="Fleetwood P."/>
            <person name="Friedman C."/>
            <person name="Gearin G."/>
            <person name="Hall J.L."/>
            <person name="Hensley G."/>
            <person name="Johnson E."/>
            <person name="Jones C."/>
            <person name="Kamat A."/>
            <person name="Kaur A."/>
            <person name="Locke D.P."/>
            <person name="Madan A."/>
            <person name="Munson G."/>
            <person name="Jaffe D.B."/>
            <person name="Lui A."/>
            <person name="Macdonald P."/>
            <person name="Mauceli E."/>
            <person name="Naylor J.W."/>
            <person name="Nesbitt R."/>
            <person name="Nicol R."/>
            <person name="O'Leary S.B."/>
            <person name="Ratcliffe A."/>
            <person name="Rounsley S."/>
            <person name="She X."/>
            <person name="Sneddon K.M.B."/>
            <person name="Stewart S."/>
            <person name="Sougnez C."/>
            <person name="Stone S.M."/>
            <person name="Topham K."/>
            <person name="Vincent D."/>
            <person name="Wang S."/>
            <person name="Zimmer A.R."/>
            <person name="Birren B.W."/>
            <person name="Hood L."/>
            <person name="Lander E.S."/>
            <person name="Nusbaum C."/>
        </authorList>
    </citation>
    <scope>NUCLEOTIDE SEQUENCE [LARGE SCALE GENOMIC DNA]</scope>
</reference>
<reference key="8">
    <citation type="submission" date="2005-09" db="EMBL/GenBank/DDBJ databases">
        <authorList>
            <person name="Mural R.J."/>
            <person name="Istrail S."/>
            <person name="Sutton G.G."/>
            <person name="Florea L."/>
            <person name="Halpern A.L."/>
            <person name="Mobarry C.M."/>
            <person name="Lippert R."/>
            <person name="Walenz B."/>
            <person name="Shatkay H."/>
            <person name="Dew I."/>
            <person name="Miller J.R."/>
            <person name="Flanigan M.J."/>
            <person name="Edwards N.J."/>
            <person name="Bolanos R."/>
            <person name="Fasulo D."/>
            <person name="Halldorsson B.V."/>
            <person name="Hannenhalli S."/>
            <person name="Turner R."/>
            <person name="Yooseph S."/>
            <person name="Lu F."/>
            <person name="Nusskern D.R."/>
            <person name="Shue B.C."/>
            <person name="Zheng X.H."/>
            <person name="Zhong F."/>
            <person name="Delcher A.L."/>
            <person name="Huson D.H."/>
            <person name="Kravitz S.A."/>
            <person name="Mouchard L."/>
            <person name="Reinert K."/>
            <person name="Remington K.A."/>
            <person name="Clark A.G."/>
            <person name="Waterman M.S."/>
            <person name="Eichler E.E."/>
            <person name="Adams M.D."/>
            <person name="Hunkapiller M.W."/>
            <person name="Myers E.W."/>
            <person name="Venter J.C."/>
        </authorList>
    </citation>
    <scope>NUCLEOTIDE SEQUENCE [LARGE SCALE GENOMIC DNA]</scope>
</reference>
<reference key="9">
    <citation type="journal article" date="2004" name="Genome Res.">
        <title>The status, quality, and expansion of the NIH full-length cDNA project: the Mammalian Gene Collection (MGC).</title>
        <authorList>
            <consortium name="The MGC Project Team"/>
        </authorList>
    </citation>
    <scope>NUCLEOTIDE SEQUENCE [LARGE SCALE MRNA] (ISOFORM 1)</scope>
    <source>
        <tissue>Skin</tissue>
    </source>
</reference>
<reference key="10">
    <citation type="journal article" date="2000" name="Biochem. Biophys. Res. Commun.">
        <title>Characterization of Bax-sigma, a cell death-inducing isoform of Bax.</title>
        <authorList>
            <person name="Schmitt E."/>
            <person name="Paquet C."/>
            <person name="Beauchemin M."/>
            <person name="Dever-Bertrand J."/>
            <person name="Bertrand R."/>
        </authorList>
    </citation>
    <scope>INTERACTION WITH BAX</scope>
</reference>
<reference key="11">
    <citation type="journal article" date="2012" name="Protein Cell">
        <title>Human Bop is a novel BH3-only member of the Bcl-2 protein family.</title>
        <authorList>
            <person name="Zhang X."/>
            <person name="Weng C."/>
            <person name="Li Y."/>
            <person name="Wang X."/>
            <person name="Jiang C."/>
            <person name="Li X."/>
            <person name="Xu Y."/>
            <person name="Chen Q."/>
            <person name="Pan L."/>
            <person name="Tang H."/>
        </authorList>
    </citation>
    <scope>INTERACTION WITH RTL10/BOP</scope>
</reference>
<reference key="12">
    <citation type="journal article" date="2021" name="Mol. Oncol.">
        <title>UBQLN4 is an ATM substrate that stabilizes the anti-apoptotic proteins BCL2A1 and BCL2L10 in mesothelioma.</title>
        <authorList>
            <person name="Liu F."/>
            <person name="Pan R."/>
            <person name="Ding H."/>
            <person name="Gu L."/>
            <person name="Yang Y."/>
            <person name="Li C."/>
            <person name="Xu Y."/>
            <person name="Hu R."/>
            <person name="Chen H."/>
            <person name="Zhang X."/>
            <person name="Nie Y."/>
        </authorList>
    </citation>
    <scope>INTERACTION WITH UBQLN4</scope>
    <scope>SUBCELLULAR LOCATION</scope>
</reference>
<reference key="13">
    <citation type="journal article" date="2008" name="FEBS Lett.">
        <title>Completing the family portrait of the anti-apoptotic Bcl-2 proteins: crystal structure of human Bfl-1 in complex with Bim.</title>
        <authorList>
            <person name="Herman M.D."/>
            <person name="Nyman T."/>
            <person name="Welin M."/>
            <person name="Lehtio L."/>
            <person name="Flodin S."/>
            <person name="Tresaugues L."/>
            <person name="Kotenyova T."/>
            <person name="Flores A."/>
            <person name="Nordlund P."/>
        </authorList>
    </citation>
    <scope>X-RAY CRYSTALLOGRAPHY (2.2 ANGSTROMS) OF 1-149 IN COMPLEX WITH BCL2L11/BIM</scope>
</reference>
<reference key="14">
    <citation type="submission" date="2008-02" db="PDB data bank">
        <title>Human BCL-2A1 in complex with BIM.</title>
        <authorList>
            <consortium name="Structural genomics consortium (SGC)"/>
        </authorList>
    </citation>
    <scope>X-RAY CRYSTALLOGRAPHY (2.2 ANGSTROMS) OF 149-608 IN COMPLEX WITH BCL2L11</scope>
</reference>
<reference key="15">
    <citation type="submission" date="2010-07" db="PDB data bank">
        <title>Crystal structure of human bfl-1 in complex with noxa bh3 peptide.</title>
        <authorList>
            <consortium name="Northeast structural genomics consortium (NESG)"/>
        </authorList>
    </citation>
    <scope>X-RAY CRYSTALLOGRAPHY (2.24 ANGSTROMS) OF 1-151 IN COMPLEX WITH PMAIP1</scope>
</reference>
<comment type="function">
    <text evidence="1 2">Retards apoptosis induced by IL-3 deprivation. May function in the response of hemopoietic cells to external signals and in maintaining endothelial survival during infection (By similarity). Can inhibit apoptosis induced by serum starvation in the mammary epithelial cell line HC11 (By similarity).</text>
</comment>
<comment type="subunit">
    <text evidence="2 3 4 5 6 7 8">Interacts directly with BAK1, BID, BMF and BBC3 (By similarity). Interacts directly with BCL2L11/BIM. Interacts with BAX isoform Sigma. Interacts directly with PMAIP1. Interacts with RTL10/BOP. Interacts with ING4 (By similarity). Interacts with UBQLN4 (PubMed:34245648).</text>
</comment>
<comment type="interaction">
    <interactant intactId="EBI-1003550">
        <id>Q16548</id>
    </interactant>
    <interactant intactId="EBI-519866">
        <id>Q16611</id>
        <label>BAK1</label>
    </interactant>
    <organismsDiffer>false</organismsDiffer>
    <experiments>6</experiments>
</comment>
<comment type="interaction">
    <interactant intactId="EBI-1003550">
        <id>Q16548</id>
    </interactant>
    <interactant intactId="EBI-526406">
        <id>O43521</id>
        <label>BCL2L11</label>
    </interactant>
    <organismsDiffer>false</organismsDiffer>
    <experiments>4</experiments>
</comment>
<comment type="interaction">
    <interactant intactId="EBI-1003550">
        <id>Q16548</id>
    </interactant>
    <interactant intactId="EBI-700794">
        <id>Q13323</id>
        <label>BIK</label>
    </interactant>
    <organismsDiffer>false</organismsDiffer>
    <experiments>10</experiments>
</comment>
<comment type="interaction">
    <interactant intactId="EBI-1003550">
        <id>Q16548</id>
    </interactant>
    <interactant intactId="EBI-12051833">
        <id>Q5HYN5</id>
        <label>CT45A1</label>
    </interactant>
    <organismsDiffer>false</organismsDiffer>
    <experiments>3</experiments>
</comment>
<comment type="interaction">
    <interactant intactId="EBI-1003550">
        <id>Q16548</id>
    </interactant>
    <interactant intactId="EBI-10175124">
        <id>Q8IZU0</id>
        <label>FAM9B</label>
    </interactant>
    <organismsDiffer>false</organismsDiffer>
    <experiments>3</experiments>
</comment>
<comment type="subcellular location">
    <subcellularLocation>
        <location evidence="6">Cytoplasm</location>
    </subcellularLocation>
</comment>
<comment type="alternative products">
    <event type="alternative splicing"/>
    <isoform>
        <id>Q16548-1</id>
        <name>1</name>
        <sequence type="displayed"/>
    </isoform>
    <isoform>
        <id>Q16548-2</id>
        <name>2</name>
        <sequence type="described" ref="VSP_043106"/>
    </isoform>
</comment>
<comment type="tissue specificity">
    <text>Seems to be restricted to the hematopoietic compartment. Expressed in peripheral blood, spleen, and bone marrow, at moderate levels in lung, small intestine and testis, at a minimal levels in other tissues. Also found in vascular smooth muscle cells and hematopoietic malignancies.</text>
</comment>
<comment type="induction">
    <text>By phorbol ester and inflammatory cytokines, such as TNF or IL1B/interleukin-1 beta, but not by growth factors.</text>
</comment>
<comment type="similarity">
    <text evidence="11">Belongs to the Bcl-2 family.</text>
</comment>
<protein>
    <recommendedName>
        <fullName>Bcl-2-related protein A1</fullName>
    </recommendedName>
    <alternativeName>
        <fullName>Bcl-2-like protein 5</fullName>
        <shortName>Bcl2-L-5</shortName>
    </alternativeName>
    <alternativeName>
        <fullName>Hemopoietic-specific early response protein</fullName>
    </alternativeName>
    <alternativeName>
        <fullName>Protein BFL-1</fullName>
    </alternativeName>
    <alternativeName>
        <fullName>Protein GRS</fullName>
    </alternativeName>
</protein>
<name>B2LA1_HUMAN</name>
<dbReference type="EMBL" id="U27467">
    <property type="protein sequence ID" value="AAC50288.1"/>
    <property type="molecule type" value="mRNA"/>
</dbReference>
<dbReference type="EMBL" id="U29680">
    <property type="protein sequence ID" value="AAC50438.1"/>
    <property type="molecule type" value="mRNA"/>
</dbReference>
<dbReference type="EMBL" id="Y09397">
    <property type="protein sequence ID" value="CAA70566.1"/>
    <property type="molecule type" value="mRNA"/>
</dbReference>
<dbReference type="EMBL" id="AY234180">
    <property type="protein sequence ID" value="AAO89009.1"/>
    <property type="molecule type" value="mRNA"/>
</dbReference>
<dbReference type="EMBL" id="BT007103">
    <property type="protein sequence ID" value="AAP35767.1"/>
    <property type="molecule type" value="mRNA"/>
</dbReference>
<dbReference type="EMBL" id="CR541937">
    <property type="protein sequence ID" value="CAG46735.1"/>
    <property type="molecule type" value="mRNA"/>
</dbReference>
<dbReference type="EMBL" id="CR541962">
    <property type="protein sequence ID" value="CAG46760.1"/>
    <property type="molecule type" value="mRNA"/>
</dbReference>
<dbReference type="EMBL" id="AC015871">
    <property type="status" value="NOT_ANNOTATED_CDS"/>
    <property type="molecule type" value="Genomic_DNA"/>
</dbReference>
<dbReference type="EMBL" id="CH471136">
    <property type="protein sequence ID" value="EAW99129.1"/>
    <property type="molecule type" value="Genomic_DNA"/>
</dbReference>
<dbReference type="EMBL" id="BC016281">
    <property type="protein sequence ID" value="AAH16281.1"/>
    <property type="molecule type" value="mRNA"/>
</dbReference>
<dbReference type="CCDS" id="CCDS10312.1">
    <molecule id="Q16548-1"/>
</dbReference>
<dbReference type="CCDS" id="CCDS45322.1">
    <molecule id="Q16548-2"/>
</dbReference>
<dbReference type="PIR" id="I39055">
    <property type="entry name" value="I39055"/>
</dbReference>
<dbReference type="RefSeq" id="NP_001108207.1">
    <molecule id="Q16548-2"/>
    <property type="nucleotide sequence ID" value="NM_001114735.2"/>
</dbReference>
<dbReference type="RefSeq" id="NP_004040.1">
    <molecule id="Q16548-1"/>
    <property type="nucleotide sequence ID" value="NM_004049.4"/>
</dbReference>
<dbReference type="PDB" id="2VM6">
    <property type="method" value="X-ray"/>
    <property type="resolution" value="2.20 A"/>
    <property type="chains" value="A=1-149"/>
</dbReference>
<dbReference type="PDB" id="3I1H">
    <property type="method" value="X-ray"/>
    <property type="resolution" value="2.20 A"/>
    <property type="chains" value="A=1-151"/>
</dbReference>
<dbReference type="PDB" id="3MQP">
    <property type="method" value="X-ray"/>
    <property type="resolution" value="2.24 A"/>
    <property type="chains" value="A=1-151"/>
</dbReference>
<dbReference type="PDB" id="4ZEQ">
    <property type="method" value="X-ray"/>
    <property type="resolution" value="1.80 A"/>
    <property type="chains" value="A=1-151"/>
</dbReference>
<dbReference type="PDB" id="5UUK">
    <property type="method" value="X-ray"/>
    <property type="resolution" value="1.20 A"/>
    <property type="chains" value="A=1-151"/>
</dbReference>
<dbReference type="PDB" id="5UUL">
    <property type="method" value="X-ray"/>
    <property type="resolution" value="1.33 A"/>
    <property type="chains" value="A=1-151"/>
</dbReference>
<dbReference type="PDB" id="5UUP">
    <property type="method" value="X-ray"/>
    <property type="resolution" value="1.73 A"/>
    <property type="chains" value="A=1-151"/>
</dbReference>
<dbReference type="PDB" id="5WHH">
    <property type="method" value="X-ray"/>
    <property type="resolution" value="2.38 A"/>
    <property type="chains" value="A=1-151"/>
</dbReference>
<dbReference type="PDB" id="5WHI">
    <property type="method" value="X-ray"/>
    <property type="resolution" value="1.69 A"/>
    <property type="chains" value="A=1-151"/>
</dbReference>
<dbReference type="PDB" id="6E3I">
    <property type="method" value="X-ray"/>
    <property type="resolution" value="1.48 A"/>
    <property type="chains" value="A=1-151"/>
</dbReference>
<dbReference type="PDB" id="6E3J">
    <property type="method" value="X-ray"/>
    <property type="resolution" value="1.48 A"/>
    <property type="chains" value="A=1-151"/>
</dbReference>
<dbReference type="PDB" id="6MBB">
    <property type="method" value="X-ray"/>
    <property type="resolution" value="1.59 A"/>
    <property type="chains" value="A=1-151"/>
</dbReference>
<dbReference type="PDB" id="6MBC">
    <property type="method" value="X-ray"/>
    <property type="resolution" value="1.75 A"/>
    <property type="chains" value="A=1-151"/>
</dbReference>
<dbReference type="PDB" id="6RJP">
    <property type="method" value="X-ray"/>
    <property type="resolution" value="2.57 A"/>
    <property type="chains" value="A/B=1-149"/>
</dbReference>
<dbReference type="PDB" id="6VO4">
    <property type="method" value="X-ray"/>
    <property type="resolution" value="1.74 A"/>
    <property type="chains" value="A=1-151"/>
</dbReference>
<dbReference type="PDB" id="8RPO">
    <property type="method" value="X-ray"/>
    <property type="resolution" value="1.79 A"/>
    <property type="chains" value="A=1-151"/>
</dbReference>
<dbReference type="PDB" id="9FKY">
    <property type="method" value="X-ray"/>
    <property type="resolution" value="1.56 A"/>
    <property type="chains" value="A/B=1-151"/>
</dbReference>
<dbReference type="PDB" id="9FKZ">
    <property type="method" value="X-ray"/>
    <property type="resolution" value="1.68 A"/>
    <property type="chains" value="A=1-151"/>
</dbReference>
<dbReference type="PDB" id="9FL0">
    <property type="method" value="X-ray"/>
    <property type="resolution" value="1.94 A"/>
    <property type="chains" value="A/B=1-151"/>
</dbReference>
<dbReference type="PDB" id="9GIP">
    <property type="method" value="X-ray"/>
    <property type="resolution" value="1.46 A"/>
    <property type="chains" value="A=1-151"/>
</dbReference>
<dbReference type="PDB" id="9GIQ">
    <property type="method" value="X-ray"/>
    <property type="resolution" value="1.42 A"/>
    <property type="chains" value="A=1-151"/>
</dbReference>
<dbReference type="PDB" id="9GIR">
    <property type="method" value="X-ray"/>
    <property type="resolution" value="1.07 A"/>
    <property type="chains" value="A=1-151"/>
</dbReference>
<dbReference type="PDB" id="9GIS">
    <property type="method" value="X-ray"/>
    <property type="resolution" value="1.39 A"/>
    <property type="chains" value="A/B=1-151"/>
</dbReference>
<dbReference type="PDB" id="9GIT">
    <property type="method" value="X-ray"/>
    <property type="resolution" value="1.15 A"/>
    <property type="chains" value="A=1-151"/>
</dbReference>
<dbReference type="PDBsum" id="2VM6"/>
<dbReference type="PDBsum" id="3I1H"/>
<dbReference type="PDBsum" id="3MQP"/>
<dbReference type="PDBsum" id="4ZEQ"/>
<dbReference type="PDBsum" id="5UUK"/>
<dbReference type="PDBsum" id="5UUL"/>
<dbReference type="PDBsum" id="5UUP"/>
<dbReference type="PDBsum" id="5WHH"/>
<dbReference type="PDBsum" id="5WHI"/>
<dbReference type="PDBsum" id="6E3I"/>
<dbReference type="PDBsum" id="6E3J"/>
<dbReference type="PDBsum" id="6MBB"/>
<dbReference type="PDBsum" id="6MBC"/>
<dbReference type="PDBsum" id="6RJP"/>
<dbReference type="PDBsum" id="6VO4"/>
<dbReference type="PDBsum" id="8RPO"/>
<dbReference type="PDBsum" id="9FKY"/>
<dbReference type="PDBsum" id="9FKZ"/>
<dbReference type="PDBsum" id="9FL0"/>
<dbReference type="PDBsum" id="9GIP"/>
<dbReference type="PDBsum" id="9GIQ"/>
<dbReference type="PDBsum" id="9GIR"/>
<dbReference type="PDBsum" id="9GIS"/>
<dbReference type="PDBsum" id="9GIT"/>
<dbReference type="SMR" id="Q16548"/>
<dbReference type="BioGRID" id="107069">
    <property type="interactions" value="25"/>
</dbReference>
<dbReference type="FunCoup" id="Q16548">
    <property type="interactions" value="330"/>
</dbReference>
<dbReference type="IntAct" id="Q16548">
    <property type="interactions" value="12"/>
</dbReference>
<dbReference type="STRING" id="9606.ENSP00000267953"/>
<dbReference type="BindingDB" id="Q16548"/>
<dbReference type="ChEMBL" id="CHEMBL6044"/>
<dbReference type="GlyGen" id="Q16548">
    <property type="glycosylation" value="4 sites"/>
</dbReference>
<dbReference type="iPTMnet" id="Q16548"/>
<dbReference type="PhosphoSitePlus" id="Q16548"/>
<dbReference type="BioMuta" id="BCL2A1"/>
<dbReference type="DMDM" id="2493280"/>
<dbReference type="MassIVE" id="Q16548"/>
<dbReference type="PaxDb" id="9606-ENSP00000267953"/>
<dbReference type="PeptideAtlas" id="Q16548"/>
<dbReference type="ProteomicsDB" id="60907">
    <molecule id="Q16548-1"/>
</dbReference>
<dbReference type="ProteomicsDB" id="60908">
    <molecule id="Q16548-2"/>
</dbReference>
<dbReference type="Antibodypedia" id="4163">
    <property type="antibodies" value="410 antibodies from 39 providers"/>
</dbReference>
<dbReference type="DNASU" id="597"/>
<dbReference type="Ensembl" id="ENST00000267953.4">
    <molecule id="Q16548-1"/>
    <property type="protein sequence ID" value="ENSP00000267953.3"/>
    <property type="gene ID" value="ENSG00000140379.9"/>
</dbReference>
<dbReference type="Ensembl" id="ENST00000335661.6">
    <molecule id="Q16548-2"/>
    <property type="protein sequence ID" value="ENSP00000335250.6"/>
    <property type="gene ID" value="ENSG00000140379.9"/>
</dbReference>
<dbReference type="GeneID" id="597"/>
<dbReference type="KEGG" id="hsa:597"/>
<dbReference type="MANE-Select" id="ENST00000267953.4">
    <property type="protein sequence ID" value="ENSP00000267953.3"/>
    <property type="RefSeq nucleotide sequence ID" value="NM_004049.4"/>
    <property type="RefSeq protein sequence ID" value="NP_004040.1"/>
</dbReference>
<dbReference type="UCSC" id="uc002bfc.5">
    <molecule id="Q16548-1"/>
    <property type="organism name" value="human"/>
</dbReference>
<dbReference type="AGR" id="HGNC:991"/>
<dbReference type="CTD" id="597"/>
<dbReference type="DisGeNET" id="597"/>
<dbReference type="GeneCards" id="BCL2A1"/>
<dbReference type="HGNC" id="HGNC:991">
    <property type="gene designation" value="BCL2A1"/>
</dbReference>
<dbReference type="HPA" id="ENSG00000140379">
    <property type="expression patterns" value="Tissue enriched (bone)"/>
</dbReference>
<dbReference type="MalaCards" id="BCL2A1"/>
<dbReference type="MIM" id="601056">
    <property type="type" value="gene"/>
</dbReference>
<dbReference type="neXtProt" id="NX_Q16548"/>
<dbReference type="OpenTargets" id="ENSG00000140379"/>
<dbReference type="PharmGKB" id="PA25303"/>
<dbReference type="VEuPathDB" id="HostDB:ENSG00000140379"/>
<dbReference type="eggNOG" id="KOG4728">
    <property type="taxonomic scope" value="Eukaryota"/>
</dbReference>
<dbReference type="GeneTree" id="ENSGT01130000278292"/>
<dbReference type="HOGENOM" id="CLU_1554763_0_0_1"/>
<dbReference type="InParanoid" id="Q16548"/>
<dbReference type="OMA" id="SKITAMF"/>
<dbReference type="OrthoDB" id="8856583at2759"/>
<dbReference type="PAN-GO" id="Q16548">
    <property type="GO annotations" value="5 GO annotations based on evolutionary models"/>
</dbReference>
<dbReference type="PhylomeDB" id="Q16548"/>
<dbReference type="TreeFam" id="TF315834"/>
<dbReference type="PathwayCommons" id="Q16548"/>
<dbReference type="Reactome" id="R-HSA-9725371">
    <property type="pathway name" value="Nuclear events stimulated by ALK signaling in cancer"/>
</dbReference>
<dbReference type="Reactome" id="R-HSA-9824594">
    <property type="pathway name" value="Regulation of MITF-M-dependent genes involved in apoptosis"/>
</dbReference>
<dbReference type="SignaLink" id="Q16548"/>
<dbReference type="SIGNOR" id="Q16548"/>
<dbReference type="BioGRID-ORCS" id="597">
    <property type="hits" value="22 hits in 1140 CRISPR screens"/>
</dbReference>
<dbReference type="ChiTaRS" id="BCL2A1">
    <property type="organism name" value="human"/>
</dbReference>
<dbReference type="EvolutionaryTrace" id="Q16548"/>
<dbReference type="GeneWiki" id="BCL2-related_protein_A1"/>
<dbReference type="GenomeRNAi" id="597"/>
<dbReference type="Pharos" id="Q16548">
    <property type="development level" value="Tchem"/>
</dbReference>
<dbReference type="PRO" id="PR:Q16548"/>
<dbReference type="Proteomes" id="UP000005640">
    <property type="component" value="Chromosome 15"/>
</dbReference>
<dbReference type="RNAct" id="Q16548">
    <property type="molecule type" value="protein"/>
</dbReference>
<dbReference type="Bgee" id="ENSG00000140379">
    <property type="expression patterns" value="Expressed in periodontal ligament and 129 other cell types or tissues"/>
</dbReference>
<dbReference type="ExpressionAtlas" id="Q16548">
    <property type="expression patterns" value="baseline and differential"/>
</dbReference>
<dbReference type="GO" id="GO:0005737">
    <property type="term" value="C:cytoplasm"/>
    <property type="evidence" value="ECO:0000314"/>
    <property type="project" value="UniProtKB"/>
</dbReference>
<dbReference type="GO" id="GO:0005829">
    <property type="term" value="C:cytosol"/>
    <property type="evidence" value="ECO:0000304"/>
    <property type="project" value="Reactome"/>
</dbReference>
<dbReference type="GO" id="GO:0005741">
    <property type="term" value="C:mitochondrial outer membrane"/>
    <property type="evidence" value="ECO:0000318"/>
    <property type="project" value="GO_Central"/>
</dbReference>
<dbReference type="GO" id="GO:0015267">
    <property type="term" value="F:channel activity"/>
    <property type="evidence" value="ECO:0000318"/>
    <property type="project" value="GO_Central"/>
</dbReference>
<dbReference type="GO" id="GO:0097192">
    <property type="term" value="P:extrinsic apoptotic signaling pathway in absence of ligand"/>
    <property type="evidence" value="ECO:0000318"/>
    <property type="project" value="GO_Central"/>
</dbReference>
<dbReference type="GO" id="GO:0008630">
    <property type="term" value="P:intrinsic apoptotic signaling pathway in response to DNA damage"/>
    <property type="evidence" value="ECO:0000318"/>
    <property type="project" value="GO_Central"/>
</dbReference>
<dbReference type="GO" id="GO:0008053">
    <property type="term" value="P:mitochondrial fusion"/>
    <property type="evidence" value="ECO:0000318"/>
    <property type="project" value="GO_Central"/>
</dbReference>
<dbReference type="GO" id="GO:0043066">
    <property type="term" value="P:negative regulation of apoptotic process"/>
    <property type="evidence" value="ECO:0000250"/>
    <property type="project" value="UniProtKB"/>
</dbReference>
<dbReference type="GO" id="GO:0043065">
    <property type="term" value="P:positive regulation of apoptotic process"/>
    <property type="evidence" value="ECO:0000318"/>
    <property type="project" value="GO_Central"/>
</dbReference>
<dbReference type="GO" id="GO:0001836">
    <property type="term" value="P:release of cytochrome c from mitochondria"/>
    <property type="evidence" value="ECO:0000318"/>
    <property type="project" value="GO_Central"/>
</dbReference>
<dbReference type="CDD" id="cd06845">
    <property type="entry name" value="Bcl-2_like"/>
    <property type="match status" value="1"/>
</dbReference>
<dbReference type="FunFam" id="1.10.437.10:FF:000008">
    <property type="entry name" value="Bcl-2-related protein A1"/>
    <property type="match status" value="1"/>
</dbReference>
<dbReference type="Gene3D" id="1.10.437.10">
    <property type="entry name" value="Blc2-like"/>
    <property type="match status" value="1"/>
</dbReference>
<dbReference type="InterPro" id="IPR036834">
    <property type="entry name" value="Bcl-2-like_sf"/>
</dbReference>
<dbReference type="InterPro" id="IPR046371">
    <property type="entry name" value="Bcl-2_BH1-3"/>
</dbReference>
<dbReference type="InterPro" id="IPR026298">
    <property type="entry name" value="Bcl-2_fam"/>
</dbReference>
<dbReference type="InterPro" id="IPR002475">
    <property type="entry name" value="Bcl2-like"/>
</dbReference>
<dbReference type="InterPro" id="IPR020717">
    <property type="entry name" value="Bcl2_BH1_motif_CS"/>
</dbReference>
<dbReference type="InterPro" id="IPR020726">
    <property type="entry name" value="Bcl2_BH2_motif_CS"/>
</dbReference>
<dbReference type="InterPro" id="IPR013282">
    <property type="entry name" value="Bcl2A1"/>
</dbReference>
<dbReference type="PANTHER" id="PTHR11256">
    <property type="entry name" value="BCL-2 RELATED"/>
    <property type="match status" value="1"/>
</dbReference>
<dbReference type="PANTHER" id="PTHR11256:SF10">
    <property type="entry name" value="BCL-2-RELATED PROTEIN A1"/>
    <property type="match status" value="1"/>
</dbReference>
<dbReference type="Pfam" id="PF00452">
    <property type="entry name" value="Bcl-2"/>
    <property type="match status" value="1"/>
</dbReference>
<dbReference type="PRINTS" id="PR01862">
    <property type="entry name" value="BCL2FAMILY"/>
</dbReference>
<dbReference type="PRINTS" id="PR01867">
    <property type="entry name" value="BCL2RLATEDA1"/>
</dbReference>
<dbReference type="SMART" id="SM00337">
    <property type="entry name" value="BCL"/>
    <property type="match status" value="1"/>
</dbReference>
<dbReference type="SUPFAM" id="SSF56854">
    <property type="entry name" value="Bcl-2 inhibitors of programmed cell death"/>
    <property type="match status" value="1"/>
</dbReference>
<dbReference type="PROSITE" id="PS50062">
    <property type="entry name" value="BCL2_FAMILY"/>
    <property type="match status" value="1"/>
</dbReference>
<dbReference type="PROSITE" id="PS01080">
    <property type="entry name" value="BH1"/>
    <property type="match status" value="1"/>
</dbReference>
<dbReference type="PROSITE" id="PS01258">
    <property type="entry name" value="BH2"/>
    <property type="match status" value="1"/>
</dbReference>
<keyword id="KW-0002">3D-structure</keyword>
<keyword id="KW-0025">Alternative splicing</keyword>
<keyword id="KW-0053">Apoptosis</keyword>
<keyword id="KW-0963">Cytoplasm</keyword>
<keyword id="KW-1267">Proteomics identification</keyword>
<keyword id="KW-1185">Reference proteome</keyword>
<feature type="chain" id="PRO_0000143094" description="Bcl-2-related protein A1">
    <location>
        <begin position="1"/>
        <end position="175"/>
    </location>
</feature>
<feature type="short sequence motif" description="BH1">
    <location>
        <begin position="77"/>
        <end position="97"/>
    </location>
</feature>
<feature type="short sequence motif" description="BH2">
    <location>
        <begin position="132"/>
        <end position="147"/>
    </location>
</feature>
<feature type="splice variant" id="VSP_043106" description="In isoform 2." evidence="10">
    <original>ENGFVKKFEPKSGWMTFLEVTGKICEMLSLLKQYC</original>
    <variation>GKWHNHTPMLVESVAHKKRKMAL</variation>
    <location>
        <begin position="141"/>
        <end position="175"/>
    </location>
</feature>
<feature type="sequence variant" id="VAR_020342" description="In dbSNP:rs1138357." evidence="9">
    <original>C</original>
    <variation>Y</variation>
    <location>
        <position position="19"/>
    </location>
</feature>
<feature type="sequence variant" id="VAR_020343" description="In dbSNP:rs1138358." evidence="9">
    <original>N</original>
    <variation>K</variation>
    <location>
        <position position="39"/>
    </location>
</feature>
<feature type="sequence variant" id="VAR_020344" description="In dbSNP:rs3826007." evidence="9">
    <original>G</original>
    <variation>D</variation>
    <location>
        <position position="82"/>
    </location>
</feature>
<feature type="sequence variant" id="VAR_044059" description="In dbSNP:rs34080999.">
    <original>E</original>
    <variation>D</variation>
    <location>
        <position position="117"/>
    </location>
</feature>
<feature type="sequence conflict" description="In Ref. 3; CAA70566." evidence="11" ref="3">
    <original>N</original>
    <variation>T</variation>
    <location>
        <position position="72"/>
    </location>
</feature>
<feature type="sequence conflict" description="In Ref. 3; CAA70566." evidence="11" ref="3">
    <original>Q</original>
    <variation>H</variation>
    <location>
        <position position="107"/>
    </location>
</feature>
<feature type="helix" evidence="12">
    <location>
        <begin position="1"/>
        <end position="4"/>
    </location>
</feature>
<feature type="helix" evidence="12">
    <location>
        <begin position="6"/>
        <end position="21"/>
    </location>
</feature>
<feature type="strand" evidence="13">
    <location>
        <begin position="26"/>
        <end position="28"/>
    </location>
</feature>
<feature type="helix" evidence="12">
    <location>
        <begin position="32"/>
        <end position="51"/>
    </location>
</feature>
<feature type="helix" evidence="12">
    <location>
        <begin position="53"/>
        <end position="56"/>
    </location>
</feature>
<feature type="helix" evidence="12">
    <location>
        <begin position="64"/>
        <end position="78"/>
    </location>
</feature>
<feature type="turn" evidence="12">
    <location>
        <begin position="79"/>
        <end position="81"/>
    </location>
</feature>
<feature type="helix" evidence="12">
    <location>
        <begin position="86"/>
        <end position="106"/>
    </location>
</feature>
<feature type="helix" evidence="12">
    <location>
        <begin position="114"/>
        <end position="136"/>
    </location>
</feature>
<feature type="helix" evidence="12">
    <location>
        <begin position="139"/>
        <end position="142"/>
    </location>
</feature>
<feature type="helix" evidence="12">
    <location>
        <begin position="144"/>
        <end position="148"/>
    </location>
</feature>
<proteinExistence type="evidence at protein level"/>
<organism>
    <name type="scientific">Homo sapiens</name>
    <name type="common">Human</name>
    <dbReference type="NCBI Taxonomy" id="9606"/>
    <lineage>
        <taxon>Eukaryota</taxon>
        <taxon>Metazoa</taxon>
        <taxon>Chordata</taxon>
        <taxon>Craniata</taxon>
        <taxon>Vertebrata</taxon>
        <taxon>Euteleostomi</taxon>
        <taxon>Mammalia</taxon>
        <taxon>Eutheria</taxon>
        <taxon>Euarchontoglires</taxon>
        <taxon>Primates</taxon>
        <taxon>Haplorrhini</taxon>
        <taxon>Catarrhini</taxon>
        <taxon>Hominidae</taxon>
        <taxon>Homo</taxon>
    </lineage>
</organism>
<gene>
    <name type="primary">BCL2A1</name>
    <name type="synonym">BCL2L5</name>
    <name type="synonym">BFL1</name>
    <name type="synonym">GRS</name>
    <name type="synonym">HBPA1</name>
</gene>
<evidence type="ECO:0000250" key="1"/>
<evidence type="ECO:0000250" key="2">
    <source>
        <dbReference type="UniProtKB" id="Q07440"/>
    </source>
</evidence>
<evidence type="ECO:0000269" key="3">
    <source>
    </source>
</evidence>
<evidence type="ECO:0000269" key="4">
    <source>
    </source>
</evidence>
<evidence type="ECO:0000269" key="5">
    <source>
    </source>
</evidence>
<evidence type="ECO:0000269" key="6">
    <source>
    </source>
</evidence>
<evidence type="ECO:0000269" key="7">
    <source ref="14"/>
</evidence>
<evidence type="ECO:0000269" key="8">
    <source ref="15"/>
</evidence>
<evidence type="ECO:0000269" key="9">
    <source ref="6"/>
</evidence>
<evidence type="ECO:0000303" key="10">
    <source ref="4"/>
</evidence>
<evidence type="ECO:0000305" key="11"/>
<evidence type="ECO:0007829" key="12">
    <source>
        <dbReference type="PDB" id="5UUK"/>
    </source>
</evidence>
<evidence type="ECO:0007829" key="13">
    <source>
        <dbReference type="PDB" id="6E3I"/>
    </source>
</evidence>
<accession>Q16548</accession>
<accession>Q6FGZ4</accession>
<accession>Q6FH19</accession>
<accession>Q86W13</accession>
<accession>Q99524</accession>